<sequence length="177" mass="19245">MPIKSRIRTVPDYPKKGIMFRDITTLIKDPVGFRLVIDNMTQHYLSNGIDFDVIVGIEARGFIIGGALSYTLGKGFVPVRKPGKLPADVVQLEYDLEYGSDKIEMHTDSLVKGQRVLLVDDLLATGGTALAAAALVEKLGGVVASMGFIVNLPDVGGEKKIRDKGYNIFSLTEFEGD</sequence>
<dbReference type="EC" id="2.4.2.7" evidence="1"/>
<dbReference type="EMBL" id="CP001099">
    <property type="protein sequence ID" value="ACF12134.1"/>
    <property type="molecule type" value="Genomic_DNA"/>
</dbReference>
<dbReference type="RefSeq" id="WP_012502967.1">
    <property type="nucleotide sequence ID" value="NC_011027.1"/>
</dbReference>
<dbReference type="SMR" id="B3QQD1"/>
<dbReference type="STRING" id="517417.Cpar_1742"/>
<dbReference type="KEGG" id="cpc:Cpar_1742"/>
<dbReference type="eggNOG" id="COG0503">
    <property type="taxonomic scope" value="Bacteria"/>
</dbReference>
<dbReference type="HOGENOM" id="CLU_063339_3_0_10"/>
<dbReference type="OrthoDB" id="9803963at2"/>
<dbReference type="UniPathway" id="UPA00588">
    <property type="reaction ID" value="UER00646"/>
</dbReference>
<dbReference type="Proteomes" id="UP000008811">
    <property type="component" value="Chromosome"/>
</dbReference>
<dbReference type="GO" id="GO:0005737">
    <property type="term" value="C:cytoplasm"/>
    <property type="evidence" value="ECO:0007669"/>
    <property type="project" value="UniProtKB-SubCell"/>
</dbReference>
<dbReference type="GO" id="GO:0002055">
    <property type="term" value="F:adenine binding"/>
    <property type="evidence" value="ECO:0007669"/>
    <property type="project" value="TreeGrafter"/>
</dbReference>
<dbReference type="GO" id="GO:0003999">
    <property type="term" value="F:adenine phosphoribosyltransferase activity"/>
    <property type="evidence" value="ECO:0007669"/>
    <property type="project" value="UniProtKB-UniRule"/>
</dbReference>
<dbReference type="GO" id="GO:0016208">
    <property type="term" value="F:AMP binding"/>
    <property type="evidence" value="ECO:0007669"/>
    <property type="project" value="TreeGrafter"/>
</dbReference>
<dbReference type="GO" id="GO:0006168">
    <property type="term" value="P:adenine salvage"/>
    <property type="evidence" value="ECO:0007669"/>
    <property type="project" value="InterPro"/>
</dbReference>
<dbReference type="GO" id="GO:0044209">
    <property type="term" value="P:AMP salvage"/>
    <property type="evidence" value="ECO:0007669"/>
    <property type="project" value="UniProtKB-UniRule"/>
</dbReference>
<dbReference type="GO" id="GO:0006166">
    <property type="term" value="P:purine ribonucleoside salvage"/>
    <property type="evidence" value="ECO:0007669"/>
    <property type="project" value="UniProtKB-KW"/>
</dbReference>
<dbReference type="CDD" id="cd06223">
    <property type="entry name" value="PRTases_typeI"/>
    <property type="match status" value="1"/>
</dbReference>
<dbReference type="FunFam" id="3.40.50.2020:FF:000021">
    <property type="entry name" value="Adenine phosphoribosyltransferase"/>
    <property type="match status" value="1"/>
</dbReference>
<dbReference type="Gene3D" id="3.40.50.2020">
    <property type="match status" value="1"/>
</dbReference>
<dbReference type="HAMAP" id="MF_00004">
    <property type="entry name" value="Aden_phosphoribosyltr"/>
    <property type="match status" value="1"/>
</dbReference>
<dbReference type="InterPro" id="IPR005764">
    <property type="entry name" value="Ade_phspho_trans"/>
</dbReference>
<dbReference type="InterPro" id="IPR000836">
    <property type="entry name" value="PRibTrfase_dom"/>
</dbReference>
<dbReference type="InterPro" id="IPR029057">
    <property type="entry name" value="PRTase-like"/>
</dbReference>
<dbReference type="InterPro" id="IPR050054">
    <property type="entry name" value="UPRTase/APRTase"/>
</dbReference>
<dbReference type="NCBIfam" id="TIGR01090">
    <property type="entry name" value="apt"/>
    <property type="match status" value="1"/>
</dbReference>
<dbReference type="NCBIfam" id="NF002634">
    <property type="entry name" value="PRK02304.1-3"/>
    <property type="match status" value="1"/>
</dbReference>
<dbReference type="NCBIfam" id="NF002636">
    <property type="entry name" value="PRK02304.1-5"/>
    <property type="match status" value="1"/>
</dbReference>
<dbReference type="PANTHER" id="PTHR32315">
    <property type="entry name" value="ADENINE PHOSPHORIBOSYLTRANSFERASE"/>
    <property type="match status" value="1"/>
</dbReference>
<dbReference type="PANTHER" id="PTHR32315:SF3">
    <property type="entry name" value="ADENINE PHOSPHORIBOSYLTRANSFERASE"/>
    <property type="match status" value="1"/>
</dbReference>
<dbReference type="Pfam" id="PF00156">
    <property type="entry name" value="Pribosyltran"/>
    <property type="match status" value="1"/>
</dbReference>
<dbReference type="SUPFAM" id="SSF53271">
    <property type="entry name" value="PRTase-like"/>
    <property type="match status" value="1"/>
</dbReference>
<dbReference type="PROSITE" id="PS00103">
    <property type="entry name" value="PUR_PYR_PR_TRANSFER"/>
    <property type="match status" value="1"/>
</dbReference>
<feature type="chain" id="PRO_1000088962" description="Adenine phosphoribosyltransferase">
    <location>
        <begin position="1"/>
        <end position="177"/>
    </location>
</feature>
<name>APT_CHLP8</name>
<evidence type="ECO:0000255" key="1">
    <source>
        <dbReference type="HAMAP-Rule" id="MF_00004"/>
    </source>
</evidence>
<protein>
    <recommendedName>
        <fullName evidence="1">Adenine phosphoribosyltransferase</fullName>
        <shortName evidence="1">APRT</shortName>
        <ecNumber evidence="1">2.4.2.7</ecNumber>
    </recommendedName>
</protein>
<comment type="function">
    <text evidence="1">Catalyzes a salvage reaction resulting in the formation of AMP, that is energically less costly than de novo synthesis.</text>
</comment>
<comment type="catalytic activity">
    <reaction evidence="1">
        <text>AMP + diphosphate = 5-phospho-alpha-D-ribose 1-diphosphate + adenine</text>
        <dbReference type="Rhea" id="RHEA:16609"/>
        <dbReference type="ChEBI" id="CHEBI:16708"/>
        <dbReference type="ChEBI" id="CHEBI:33019"/>
        <dbReference type="ChEBI" id="CHEBI:58017"/>
        <dbReference type="ChEBI" id="CHEBI:456215"/>
        <dbReference type="EC" id="2.4.2.7"/>
    </reaction>
</comment>
<comment type="pathway">
    <text evidence="1">Purine metabolism; AMP biosynthesis via salvage pathway; AMP from adenine: step 1/1.</text>
</comment>
<comment type="subunit">
    <text evidence="1">Homodimer.</text>
</comment>
<comment type="subcellular location">
    <subcellularLocation>
        <location evidence="1">Cytoplasm</location>
    </subcellularLocation>
</comment>
<comment type="similarity">
    <text evidence="1">Belongs to the purine/pyrimidine phosphoribosyltransferase family.</text>
</comment>
<keyword id="KW-0963">Cytoplasm</keyword>
<keyword id="KW-0328">Glycosyltransferase</keyword>
<keyword id="KW-0660">Purine salvage</keyword>
<keyword id="KW-0808">Transferase</keyword>
<accession>B3QQD1</accession>
<proteinExistence type="inferred from homology"/>
<reference key="1">
    <citation type="submission" date="2008-06" db="EMBL/GenBank/DDBJ databases">
        <title>Complete sequence of Chlorobaculum parvum NCIB 8327.</title>
        <authorList>
            <consortium name="US DOE Joint Genome Institute"/>
            <person name="Lucas S."/>
            <person name="Copeland A."/>
            <person name="Lapidus A."/>
            <person name="Glavina del Rio T."/>
            <person name="Dalin E."/>
            <person name="Tice H."/>
            <person name="Bruce D."/>
            <person name="Goodwin L."/>
            <person name="Pitluck S."/>
            <person name="Schmutz J."/>
            <person name="Larimer F."/>
            <person name="Land M."/>
            <person name="Hauser L."/>
            <person name="Kyrpides N."/>
            <person name="Mikhailova N."/>
            <person name="Zhao F."/>
            <person name="Li T."/>
            <person name="Liu Z."/>
            <person name="Overmann J."/>
            <person name="Bryant D.A."/>
            <person name="Richardson P."/>
        </authorList>
    </citation>
    <scope>NUCLEOTIDE SEQUENCE [LARGE SCALE GENOMIC DNA]</scope>
    <source>
        <strain>DSM 263 / NCIMB 8327</strain>
    </source>
</reference>
<gene>
    <name evidence="1" type="primary">apt</name>
    <name type="ordered locus">Cpar_1742</name>
</gene>
<organism>
    <name type="scientific">Chlorobaculum parvum (strain DSM 263 / NCIMB 8327)</name>
    <name type="common">Chlorobium vibrioforme subsp. thiosulfatophilum</name>
    <dbReference type="NCBI Taxonomy" id="517417"/>
    <lineage>
        <taxon>Bacteria</taxon>
        <taxon>Pseudomonadati</taxon>
        <taxon>Chlorobiota</taxon>
        <taxon>Chlorobiia</taxon>
        <taxon>Chlorobiales</taxon>
        <taxon>Chlorobiaceae</taxon>
        <taxon>Chlorobaculum</taxon>
    </lineage>
</organism>